<comment type="function">
    <text evidence="1">Autophagy-specific protein that functions in response to autophagy-inducing signals as a scaffold to recruit other ATG proteins to organize pre-autophagosomal structure (PAS) formation. Modulates the timing and magnitude of the autophagy response, such as the size of the sequestering vesicles. Plays particularly a role in pexophagy and nucleophagy (By similarity).</text>
</comment>
<comment type="subcellular location">
    <subcellularLocation>
        <location evidence="1">Cytoplasm</location>
    </subcellularLocation>
    <subcellularLocation>
        <location evidence="1">Preautophagosomal structure membrane</location>
        <topology evidence="1">Peripheral membrane protein</topology>
    </subcellularLocation>
</comment>
<comment type="similarity">
    <text evidence="3">Belongs to the ATG17 family.</text>
</comment>
<feature type="chain" id="PRO_0000124555" description="Autophagy-related protein 17">
    <location>
        <begin position="1"/>
        <end position="413"/>
    </location>
</feature>
<feature type="coiled-coil region" evidence="2">
    <location>
        <begin position="262"/>
        <end position="300"/>
    </location>
</feature>
<reference key="1">
    <citation type="journal article" date="2004" name="Science">
        <title>The Ashbya gossypii genome as a tool for mapping the ancient Saccharomyces cerevisiae genome.</title>
        <authorList>
            <person name="Dietrich F.S."/>
            <person name="Voegeli S."/>
            <person name="Brachat S."/>
            <person name="Lerch A."/>
            <person name="Gates K."/>
            <person name="Steiner S."/>
            <person name="Mohr C."/>
            <person name="Poehlmann R."/>
            <person name="Luedi P."/>
            <person name="Choi S."/>
            <person name="Wing R.A."/>
            <person name="Flavier A."/>
            <person name="Gaffney T.D."/>
            <person name="Philippsen P."/>
        </authorList>
    </citation>
    <scope>NUCLEOTIDE SEQUENCE [LARGE SCALE GENOMIC DNA]</scope>
    <source>
        <strain>ATCC 10895 / CBS 109.51 / FGSC 9923 / NRRL Y-1056</strain>
    </source>
</reference>
<reference key="2">
    <citation type="journal article" date="2013" name="G3 (Bethesda)">
        <title>Genomes of Ashbya fungi isolated from insects reveal four mating-type loci, numerous translocations, lack of transposons, and distinct gene duplications.</title>
        <authorList>
            <person name="Dietrich F.S."/>
            <person name="Voegeli S."/>
            <person name="Kuo S."/>
            <person name="Philippsen P."/>
        </authorList>
    </citation>
    <scope>GENOME REANNOTATION</scope>
    <source>
        <strain>ATCC 10895 / CBS 109.51 / FGSC 9923 / NRRL Y-1056</strain>
    </source>
</reference>
<name>ATG17_EREGS</name>
<sequence length="413" mass="47998">MSSSNQVKGFYFNAQRRLSRAQALCQNSQDTLHNMQLLLVRWQRTVSKLQFTIHCICNQTVFLAECILKKTVGQQLIETEWKRMLLDELQGEMQRSQEEITGKIDALRRTKNELDGSGATLADFISMENIFLLGDKLKDVPVVQEQVEHIKVQYESLVDKVVEQLQNNRVRKLEADFAAAFRSGKNDFNAFSMKYLQKIRQLETDLADILKSLTDHYDKCSLLKAGDLPAAEQAELFEVVKNDDQELDSIMGVLEVIVRDIKSLAKNVSIRLRQKERDKQQLKNAMGKAHSELLKYEEHLTVFQGIDDLIRNFKASCLHNVSKVRELCEFYDNFLNSYQVLLREVERRRRVAKQMEDILQACEGQLMALSDTDLKQRQQFLMRHGDYLPENIWPGNIDDLSPLYDLEYRIKKV</sequence>
<proteinExistence type="inferred from homology"/>
<accession>Q757A7</accession>
<dbReference type="EMBL" id="AE016818">
    <property type="protein sequence ID" value="AAS52790.1"/>
    <property type="molecule type" value="Genomic_DNA"/>
</dbReference>
<dbReference type="RefSeq" id="NP_984966.1">
    <property type="nucleotide sequence ID" value="NM_210320.1"/>
</dbReference>
<dbReference type="SMR" id="Q757A7"/>
<dbReference type="FunCoup" id="Q757A7">
    <property type="interactions" value="188"/>
</dbReference>
<dbReference type="STRING" id="284811.Q757A7"/>
<dbReference type="EnsemblFungi" id="AAS52790">
    <property type="protein sequence ID" value="AAS52790"/>
    <property type="gene ID" value="AGOS_AER106C"/>
</dbReference>
<dbReference type="GeneID" id="4621171"/>
<dbReference type="KEGG" id="ago:AGOS_AER106C"/>
<dbReference type="eggNOG" id="ENOG502QQDW">
    <property type="taxonomic scope" value="Eukaryota"/>
</dbReference>
<dbReference type="HOGENOM" id="CLU_051526_0_0_1"/>
<dbReference type="InParanoid" id="Q757A7"/>
<dbReference type="OMA" id="PENIWPN"/>
<dbReference type="OrthoDB" id="1937984at2759"/>
<dbReference type="Proteomes" id="UP000000591">
    <property type="component" value="Chromosome V"/>
</dbReference>
<dbReference type="GO" id="GO:1990316">
    <property type="term" value="C:Atg1/ULK1 kinase complex"/>
    <property type="evidence" value="ECO:0000318"/>
    <property type="project" value="GO_Central"/>
</dbReference>
<dbReference type="GO" id="GO:0000407">
    <property type="term" value="C:phagophore assembly site"/>
    <property type="evidence" value="ECO:0000318"/>
    <property type="project" value="GO_Central"/>
</dbReference>
<dbReference type="GO" id="GO:0034045">
    <property type="term" value="C:phagophore assembly site membrane"/>
    <property type="evidence" value="ECO:0007669"/>
    <property type="project" value="UniProtKB-SubCell"/>
</dbReference>
<dbReference type="GO" id="GO:0120095">
    <property type="term" value="C:vacuole-isolation membrane contact site"/>
    <property type="evidence" value="ECO:0007669"/>
    <property type="project" value="EnsemblFungi"/>
</dbReference>
<dbReference type="GO" id="GO:0060090">
    <property type="term" value="F:molecular adaptor activity"/>
    <property type="evidence" value="ECO:0000318"/>
    <property type="project" value="GO_Central"/>
</dbReference>
<dbReference type="GO" id="GO:0030295">
    <property type="term" value="F:protein kinase activator activity"/>
    <property type="evidence" value="ECO:0000318"/>
    <property type="project" value="GO_Central"/>
</dbReference>
<dbReference type="GO" id="GO:0000149">
    <property type="term" value="F:SNARE binding"/>
    <property type="evidence" value="ECO:0007669"/>
    <property type="project" value="EnsemblFungi"/>
</dbReference>
<dbReference type="GO" id="GO:0000045">
    <property type="term" value="P:autophagosome assembly"/>
    <property type="evidence" value="ECO:0000318"/>
    <property type="project" value="GO_Central"/>
</dbReference>
<dbReference type="GO" id="GO:0006995">
    <property type="term" value="P:cellular response to nitrogen starvation"/>
    <property type="evidence" value="ECO:0007669"/>
    <property type="project" value="EnsemblFungi"/>
</dbReference>
<dbReference type="GO" id="GO:0000423">
    <property type="term" value="P:mitophagy"/>
    <property type="evidence" value="ECO:0000318"/>
    <property type="project" value="GO_Central"/>
</dbReference>
<dbReference type="GO" id="GO:0000425">
    <property type="term" value="P:pexophagy"/>
    <property type="evidence" value="ECO:0000318"/>
    <property type="project" value="GO_Central"/>
</dbReference>
<dbReference type="GO" id="GO:0034727">
    <property type="term" value="P:piecemeal microautophagy of the nucleus"/>
    <property type="evidence" value="ECO:0000318"/>
    <property type="project" value="GO_Central"/>
</dbReference>
<dbReference type="GO" id="GO:2000786">
    <property type="term" value="P:positive regulation of autophagosome assembly"/>
    <property type="evidence" value="ECO:0007669"/>
    <property type="project" value="EnsemblFungi"/>
</dbReference>
<dbReference type="GO" id="GO:0045772">
    <property type="term" value="P:positive regulation of autophagosome size"/>
    <property type="evidence" value="ECO:0007669"/>
    <property type="project" value="EnsemblFungi"/>
</dbReference>
<dbReference type="GO" id="GO:0034497">
    <property type="term" value="P:protein localization to phagophore assembly site"/>
    <property type="evidence" value="ECO:0007669"/>
    <property type="project" value="EnsemblFungi"/>
</dbReference>
<dbReference type="InterPro" id="IPR007240">
    <property type="entry name" value="Atg17"/>
</dbReference>
<dbReference type="InterPro" id="IPR045326">
    <property type="entry name" value="ATG17-like_dom"/>
</dbReference>
<dbReference type="PANTHER" id="PTHR28005">
    <property type="entry name" value="AUTOPHAGY-RELATED PROTEIN 17"/>
    <property type="match status" value="1"/>
</dbReference>
<dbReference type="PANTHER" id="PTHR28005:SF1">
    <property type="entry name" value="AUTOPHAGY-RELATED PROTEIN 17"/>
    <property type="match status" value="1"/>
</dbReference>
<dbReference type="Pfam" id="PF04108">
    <property type="entry name" value="ATG17_like"/>
    <property type="match status" value="1"/>
</dbReference>
<gene>
    <name type="primary">ATG17</name>
    <name type="ordered locus">AER106C</name>
</gene>
<keyword id="KW-0072">Autophagy</keyword>
<keyword id="KW-0175">Coiled coil</keyword>
<keyword id="KW-0963">Cytoplasm</keyword>
<keyword id="KW-0472">Membrane</keyword>
<keyword id="KW-1185">Reference proteome</keyword>
<protein>
    <recommendedName>
        <fullName>Autophagy-related protein 17</fullName>
    </recommendedName>
</protein>
<evidence type="ECO:0000250" key="1"/>
<evidence type="ECO:0000255" key="2"/>
<evidence type="ECO:0000305" key="3"/>
<organism>
    <name type="scientific">Eremothecium gossypii (strain ATCC 10895 / CBS 109.51 / FGSC 9923 / NRRL Y-1056)</name>
    <name type="common">Yeast</name>
    <name type="synonym">Ashbya gossypii</name>
    <dbReference type="NCBI Taxonomy" id="284811"/>
    <lineage>
        <taxon>Eukaryota</taxon>
        <taxon>Fungi</taxon>
        <taxon>Dikarya</taxon>
        <taxon>Ascomycota</taxon>
        <taxon>Saccharomycotina</taxon>
        <taxon>Saccharomycetes</taxon>
        <taxon>Saccharomycetales</taxon>
        <taxon>Saccharomycetaceae</taxon>
        <taxon>Eremothecium</taxon>
    </lineage>
</organism>